<gene>
    <name evidence="1" type="primary">glyA2</name>
    <name type="ordered locus">VV2_0188</name>
</gene>
<name>GLYA2_VIBVU</name>
<sequence length="431" mass="46460">MNSHYQNHSLENFFSTNLSATDDAVFAGIQAEFTRQNEQIELIASENIVSKAVMQAQGTCLTNKYAEGYPGRRYYGGCEHVDTVEAIAIERAKKLFNCEYANVQPHSGAQANGAVKLALLQPGDTIMGMSLDAGGHLTHGARPALSGKWFNAVQYGVDKETLEINYDDVRALAVEHKPKMIIAGGSAIPRVIDFAKFREIADEVGAILMVDMAHIAGLIATGAHPSPLPHAHVVTTTTHKTLRGPRGGMILTNHEEIIKKINSAVFPGLQGGPLMHVIAAKAVAFGEALGPEFKTYIDSVIDNAKVLAEVLQTRGCDIVTGGTDTHLMLVDLRPKGLKGNKAEEALERAGITCNKNGIPFDTEKPMITSGVRLGTPAGTSRGFGAEEFKLIGHWIGDVLDGLVENPEGNAEVEQRVRKEVKALCSRFPLYQ</sequence>
<accession>Q8D7G5</accession>
<dbReference type="EC" id="2.1.2.1" evidence="1"/>
<dbReference type="EMBL" id="AE016796">
    <property type="protein sequence ID" value="AAO07161.1"/>
    <property type="molecule type" value="Genomic_DNA"/>
</dbReference>
<dbReference type="RefSeq" id="WP_011081168.1">
    <property type="nucleotide sequence ID" value="NC_004460.2"/>
</dbReference>
<dbReference type="SMR" id="Q8D7G5"/>
<dbReference type="KEGG" id="vvu:VV2_0188"/>
<dbReference type="HOGENOM" id="CLU_022477_2_1_6"/>
<dbReference type="UniPathway" id="UPA00193"/>
<dbReference type="UniPathway" id="UPA00288">
    <property type="reaction ID" value="UER01023"/>
</dbReference>
<dbReference type="Proteomes" id="UP000002275">
    <property type="component" value="Chromosome 2"/>
</dbReference>
<dbReference type="GO" id="GO:0005829">
    <property type="term" value="C:cytosol"/>
    <property type="evidence" value="ECO:0007669"/>
    <property type="project" value="TreeGrafter"/>
</dbReference>
<dbReference type="GO" id="GO:0004372">
    <property type="term" value="F:glycine hydroxymethyltransferase activity"/>
    <property type="evidence" value="ECO:0007669"/>
    <property type="project" value="UniProtKB-UniRule"/>
</dbReference>
<dbReference type="GO" id="GO:0030170">
    <property type="term" value="F:pyridoxal phosphate binding"/>
    <property type="evidence" value="ECO:0007669"/>
    <property type="project" value="UniProtKB-UniRule"/>
</dbReference>
<dbReference type="GO" id="GO:0019264">
    <property type="term" value="P:glycine biosynthetic process from serine"/>
    <property type="evidence" value="ECO:0007669"/>
    <property type="project" value="UniProtKB-UniRule"/>
</dbReference>
<dbReference type="GO" id="GO:0035999">
    <property type="term" value="P:tetrahydrofolate interconversion"/>
    <property type="evidence" value="ECO:0007669"/>
    <property type="project" value="UniProtKB-UniRule"/>
</dbReference>
<dbReference type="CDD" id="cd00378">
    <property type="entry name" value="SHMT"/>
    <property type="match status" value="1"/>
</dbReference>
<dbReference type="FunFam" id="3.40.640.10:FF:000001">
    <property type="entry name" value="Serine hydroxymethyltransferase"/>
    <property type="match status" value="1"/>
</dbReference>
<dbReference type="FunFam" id="3.90.1150.10:FF:000003">
    <property type="entry name" value="Serine hydroxymethyltransferase"/>
    <property type="match status" value="1"/>
</dbReference>
<dbReference type="Gene3D" id="3.90.1150.10">
    <property type="entry name" value="Aspartate Aminotransferase, domain 1"/>
    <property type="match status" value="1"/>
</dbReference>
<dbReference type="Gene3D" id="3.40.640.10">
    <property type="entry name" value="Type I PLP-dependent aspartate aminotransferase-like (Major domain)"/>
    <property type="match status" value="1"/>
</dbReference>
<dbReference type="HAMAP" id="MF_00051">
    <property type="entry name" value="SHMT"/>
    <property type="match status" value="1"/>
</dbReference>
<dbReference type="InterPro" id="IPR015424">
    <property type="entry name" value="PyrdxlP-dep_Trfase"/>
</dbReference>
<dbReference type="InterPro" id="IPR015421">
    <property type="entry name" value="PyrdxlP-dep_Trfase_major"/>
</dbReference>
<dbReference type="InterPro" id="IPR015422">
    <property type="entry name" value="PyrdxlP-dep_Trfase_small"/>
</dbReference>
<dbReference type="InterPro" id="IPR001085">
    <property type="entry name" value="Ser_HO-MeTrfase"/>
</dbReference>
<dbReference type="InterPro" id="IPR049943">
    <property type="entry name" value="Ser_HO-MeTrfase-like"/>
</dbReference>
<dbReference type="InterPro" id="IPR019798">
    <property type="entry name" value="Ser_HO-MeTrfase_PLP_BS"/>
</dbReference>
<dbReference type="InterPro" id="IPR039429">
    <property type="entry name" value="SHMT-like_dom"/>
</dbReference>
<dbReference type="NCBIfam" id="NF000586">
    <property type="entry name" value="PRK00011.1"/>
    <property type="match status" value="1"/>
</dbReference>
<dbReference type="PANTHER" id="PTHR11680">
    <property type="entry name" value="SERINE HYDROXYMETHYLTRANSFERASE"/>
    <property type="match status" value="1"/>
</dbReference>
<dbReference type="PANTHER" id="PTHR11680:SF35">
    <property type="entry name" value="SERINE HYDROXYMETHYLTRANSFERASE 1"/>
    <property type="match status" value="1"/>
</dbReference>
<dbReference type="Pfam" id="PF00464">
    <property type="entry name" value="SHMT"/>
    <property type="match status" value="1"/>
</dbReference>
<dbReference type="PIRSF" id="PIRSF000412">
    <property type="entry name" value="SHMT"/>
    <property type="match status" value="1"/>
</dbReference>
<dbReference type="SUPFAM" id="SSF53383">
    <property type="entry name" value="PLP-dependent transferases"/>
    <property type="match status" value="1"/>
</dbReference>
<dbReference type="PROSITE" id="PS00096">
    <property type="entry name" value="SHMT"/>
    <property type="match status" value="1"/>
</dbReference>
<keyword id="KW-0028">Amino-acid biosynthesis</keyword>
<keyword id="KW-0963">Cytoplasm</keyword>
<keyword id="KW-0554">One-carbon metabolism</keyword>
<keyword id="KW-0663">Pyridoxal phosphate</keyword>
<keyword id="KW-0808">Transferase</keyword>
<feature type="chain" id="PRO_0000113695" description="Serine hydroxymethyltransferase 2">
    <location>
        <begin position="1"/>
        <end position="431"/>
    </location>
</feature>
<feature type="binding site" evidence="1">
    <location>
        <position position="131"/>
    </location>
    <ligand>
        <name>(6S)-5,6,7,8-tetrahydrofolate</name>
        <dbReference type="ChEBI" id="CHEBI:57453"/>
    </ligand>
</feature>
<feature type="binding site" evidence="1">
    <location>
        <begin position="135"/>
        <end position="137"/>
    </location>
    <ligand>
        <name>(6S)-5,6,7,8-tetrahydrofolate</name>
        <dbReference type="ChEBI" id="CHEBI:57453"/>
    </ligand>
</feature>
<feature type="binding site" evidence="1">
    <location>
        <position position="256"/>
    </location>
    <ligand>
        <name>(6S)-5,6,7,8-tetrahydrofolate</name>
        <dbReference type="ChEBI" id="CHEBI:57453"/>
    </ligand>
</feature>
<feature type="site" description="Plays an important role in substrate specificity" evidence="1">
    <location>
        <position position="239"/>
    </location>
</feature>
<feature type="modified residue" description="N6-(pyridoxal phosphate)lysine" evidence="1">
    <location>
        <position position="240"/>
    </location>
</feature>
<protein>
    <recommendedName>
        <fullName evidence="1">Serine hydroxymethyltransferase 2</fullName>
        <shortName evidence="1">SHMT 2</shortName>
        <shortName evidence="1">Serine methylase 2</shortName>
        <ecNumber evidence="1">2.1.2.1</ecNumber>
    </recommendedName>
</protein>
<proteinExistence type="inferred from homology"/>
<reference key="1">
    <citation type="submission" date="2002-12" db="EMBL/GenBank/DDBJ databases">
        <title>Complete genome sequence of Vibrio vulnificus CMCP6.</title>
        <authorList>
            <person name="Rhee J.H."/>
            <person name="Kim S.Y."/>
            <person name="Chung S.S."/>
            <person name="Kim J.J."/>
            <person name="Moon Y.H."/>
            <person name="Jeong H."/>
            <person name="Choy H.E."/>
        </authorList>
    </citation>
    <scope>NUCLEOTIDE SEQUENCE [LARGE SCALE GENOMIC DNA]</scope>
    <source>
        <strain>CMCP6</strain>
    </source>
</reference>
<organism>
    <name type="scientific">Vibrio vulnificus (strain CMCP6)</name>
    <dbReference type="NCBI Taxonomy" id="216895"/>
    <lineage>
        <taxon>Bacteria</taxon>
        <taxon>Pseudomonadati</taxon>
        <taxon>Pseudomonadota</taxon>
        <taxon>Gammaproteobacteria</taxon>
        <taxon>Vibrionales</taxon>
        <taxon>Vibrionaceae</taxon>
        <taxon>Vibrio</taxon>
    </lineage>
</organism>
<evidence type="ECO:0000255" key="1">
    <source>
        <dbReference type="HAMAP-Rule" id="MF_00051"/>
    </source>
</evidence>
<comment type="function">
    <text evidence="1">Catalyzes the reversible interconversion of serine and glycine with tetrahydrofolate (THF) serving as the one-carbon carrier. This reaction serves as the major source of one-carbon groups required for the biosynthesis of purines, thymidylate, methionine, and other important biomolecules. Also exhibits THF-independent aldolase activity toward beta-hydroxyamino acids, producing glycine and aldehydes, via a retro-aldol mechanism.</text>
</comment>
<comment type="catalytic activity">
    <reaction evidence="1">
        <text>(6R)-5,10-methylene-5,6,7,8-tetrahydrofolate + glycine + H2O = (6S)-5,6,7,8-tetrahydrofolate + L-serine</text>
        <dbReference type="Rhea" id="RHEA:15481"/>
        <dbReference type="ChEBI" id="CHEBI:15377"/>
        <dbReference type="ChEBI" id="CHEBI:15636"/>
        <dbReference type="ChEBI" id="CHEBI:33384"/>
        <dbReference type="ChEBI" id="CHEBI:57305"/>
        <dbReference type="ChEBI" id="CHEBI:57453"/>
        <dbReference type="EC" id="2.1.2.1"/>
    </reaction>
</comment>
<comment type="cofactor">
    <cofactor evidence="1">
        <name>pyridoxal 5'-phosphate</name>
        <dbReference type="ChEBI" id="CHEBI:597326"/>
    </cofactor>
</comment>
<comment type="pathway">
    <text evidence="1">One-carbon metabolism; tetrahydrofolate interconversion.</text>
</comment>
<comment type="pathway">
    <text evidence="1">Amino-acid biosynthesis; glycine biosynthesis; glycine from L-serine: step 1/1.</text>
</comment>
<comment type="subunit">
    <text evidence="1">Homodimer.</text>
</comment>
<comment type="subcellular location">
    <subcellularLocation>
        <location evidence="1">Cytoplasm</location>
    </subcellularLocation>
</comment>
<comment type="similarity">
    <text evidence="1">Belongs to the SHMT family.</text>
</comment>